<accession>Q0A6T1</accession>
<keyword id="KW-0963">Cytoplasm</keyword>
<keyword id="KW-0560">Oxidoreductase</keyword>
<keyword id="KW-1185">Reference proteome</keyword>
<gene>
    <name evidence="1" type="primary">cysH</name>
    <name type="ordered locus">Mlg_2114</name>
</gene>
<comment type="function">
    <text evidence="1">Catalyzes the formation of sulfite from phosphoadenosine 5'-phosphosulfate (PAPS) using thioredoxin as an electron donor.</text>
</comment>
<comment type="catalytic activity">
    <reaction evidence="1">
        <text>[thioredoxin]-disulfide + sulfite + adenosine 3',5'-bisphosphate + 2 H(+) = [thioredoxin]-dithiol + 3'-phosphoadenylyl sulfate</text>
        <dbReference type="Rhea" id="RHEA:11724"/>
        <dbReference type="Rhea" id="RHEA-COMP:10698"/>
        <dbReference type="Rhea" id="RHEA-COMP:10700"/>
        <dbReference type="ChEBI" id="CHEBI:15378"/>
        <dbReference type="ChEBI" id="CHEBI:17359"/>
        <dbReference type="ChEBI" id="CHEBI:29950"/>
        <dbReference type="ChEBI" id="CHEBI:50058"/>
        <dbReference type="ChEBI" id="CHEBI:58339"/>
        <dbReference type="ChEBI" id="CHEBI:58343"/>
        <dbReference type="EC" id="1.8.4.8"/>
    </reaction>
</comment>
<comment type="pathway">
    <text evidence="1">Sulfur metabolism; hydrogen sulfide biosynthesis; sulfite from sulfate: step 3/3.</text>
</comment>
<comment type="subcellular location">
    <subcellularLocation>
        <location evidence="1">Cytoplasm</location>
    </subcellularLocation>
</comment>
<comment type="similarity">
    <text evidence="1">Belongs to the PAPS reductase family. CysH subfamily.</text>
</comment>
<proteinExistence type="inferred from homology"/>
<organism>
    <name type="scientific">Alkalilimnicola ehrlichii (strain ATCC BAA-1101 / DSM 17681 / MLHE-1)</name>
    <dbReference type="NCBI Taxonomy" id="187272"/>
    <lineage>
        <taxon>Bacteria</taxon>
        <taxon>Pseudomonadati</taxon>
        <taxon>Pseudomonadota</taxon>
        <taxon>Gammaproteobacteria</taxon>
        <taxon>Chromatiales</taxon>
        <taxon>Ectothiorhodospiraceae</taxon>
        <taxon>Alkalilimnicola</taxon>
    </lineage>
</organism>
<evidence type="ECO:0000255" key="1">
    <source>
        <dbReference type="HAMAP-Rule" id="MF_00063"/>
    </source>
</evidence>
<protein>
    <recommendedName>
        <fullName evidence="1">Phosphoadenosine 5'-phosphosulfate reductase</fullName>
        <shortName evidence="1">PAPS reductase</shortName>
        <ecNumber evidence="1">1.8.4.8</ecNumber>
    </recommendedName>
    <alternativeName>
        <fullName evidence="1">3'-phosphoadenylylsulfate reductase</fullName>
    </alternativeName>
    <alternativeName>
        <fullName evidence="1">PAPS reductase, thioredoxin dependent</fullName>
    </alternativeName>
    <alternativeName>
        <fullName evidence="1">PAPS sulfotransferase</fullName>
    </alternativeName>
    <alternativeName>
        <fullName evidence="1">PAdoPS reductase</fullName>
    </alternativeName>
</protein>
<sequence length="245" mass="28176">MANRPQALKIHPQPVLAPGELDSVRRQLAAASAQERVRWGLARFPGRIVLASSFGAQAAVSLHLVTREQPDIPVVLVDTGYLFPETYRFVDELTERLGLNLQVARPAHSAAWQEARFGRLWEQGVEGIERYNRMNKVEPMQQALETLGADAWFAGLRRQQAHSRQQRQVVEIQNDRVKVHPIIDWTDRDVHRYLTRHDLPYHPLWHEGYVSIGDVHTTRRLADGMSEEETRFFGLRRECGLHDLV</sequence>
<name>CYSH_ALKEH</name>
<feature type="chain" id="PRO_1000075068" description="Phosphoadenosine 5'-phosphosulfate reductase">
    <location>
        <begin position="1"/>
        <end position="245"/>
    </location>
</feature>
<feature type="active site" description="Nucleophile; cysteine thiosulfonate intermediate" evidence="1">
    <location>
        <position position="239"/>
    </location>
</feature>
<reference key="1">
    <citation type="submission" date="2006-08" db="EMBL/GenBank/DDBJ databases">
        <title>Complete sequence of Alkalilimnicola ehrilichei MLHE-1.</title>
        <authorList>
            <person name="Copeland A."/>
            <person name="Lucas S."/>
            <person name="Lapidus A."/>
            <person name="Barry K."/>
            <person name="Detter J.C."/>
            <person name="Glavina del Rio T."/>
            <person name="Hammon N."/>
            <person name="Israni S."/>
            <person name="Dalin E."/>
            <person name="Tice H."/>
            <person name="Pitluck S."/>
            <person name="Sims D."/>
            <person name="Brettin T."/>
            <person name="Bruce D."/>
            <person name="Han C."/>
            <person name="Tapia R."/>
            <person name="Gilna P."/>
            <person name="Schmutz J."/>
            <person name="Larimer F."/>
            <person name="Land M."/>
            <person name="Hauser L."/>
            <person name="Kyrpides N."/>
            <person name="Mikhailova N."/>
            <person name="Oremland R.S."/>
            <person name="Hoeft S.E."/>
            <person name="Switzer-Blum J."/>
            <person name="Kulp T."/>
            <person name="King G."/>
            <person name="Tabita R."/>
            <person name="Witte B."/>
            <person name="Santini J.M."/>
            <person name="Basu P."/>
            <person name="Hollibaugh J.T."/>
            <person name="Xie G."/>
            <person name="Stolz J.F."/>
            <person name="Richardson P."/>
        </authorList>
    </citation>
    <scope>NUCLEOTIDE SEQUENCE [LARGE SCALE GENOMIC DNA]</scope>
    <source>
        <strain>ATCC BAA-1101 / DSM 17681 / MLHE-1</strain>
    </source>
</reference>
<dbReference type="EC" id="1.8.4.8" evidence="1"/>
<dbReference type="EMBL" id="CP000453">
    <property type="protein sequence ID" value="ABI57456.1"/>
    <property type="molecule type" value="Genomic_DNA"/>
</dbReference>
<dbReference type="RefSeq" id="WP_011629850.1">
    <property type="nucleotide sequence ID" value="NC_008340.1"/>
</dbReference>
<dbReference type="SMR" id="Q0A6T1"/>
<dbReference type="KEGG" id="aeh:Mlg_2114"/>
<dbReference type="eggNOG" id="COG0175">
    <property type="taxonomic scope" value="Bacteria"/>
</dbReference>
<dbReference type="HOGENOM" id="CLU_044089_3_0_6"/>
<dbReference type="OrthoDB" id="9794018at2"/>
<dbReference type="UniPathway" id="UPA00140">
    <property type="reaction ID" value="UER00206"/>
</dbReference>
<dbReference type="Proteomes" id="UP000001962">
    <property type="component" value="Chromosome"/>
</dbReference>
<dbReference type="GO" id="GO:0005737">
    <property type="term" value="C:cytoplasm"/>
    <property type="evidence" value="ECO:0007669"/>
    <property type="project" value="UniProtKB-SubCell"/>
</dbReference>
<dbReference type="GO" id="GO:0004604">
    <property type="term" value="F:phosphoadenylyl-sulfate reductase (thioredoxin) activity"/>
    <property type="evidence" value="ECO:0007669"/>
    <property type="project" value="UniProtKB-UniRule"/>
</dbReference>
<dbReference type="GO" id="GO:0070814">
    <property type="term" value="P:hydrogen sulfide biosynthetic process"/>
    <property type="evidence" value="ECO:0007669"/>
    <property type="project" value="UniProtKB-UniRule"/>
</dbReference>
<dbReference type="GO" id="GO:0019379">
    <property type="term" value="P:sulfate assimilation, phosphoadenylyl sulfate reduction by phosphoadenylyl-sulfate reductase (thioredoxin)"/>
    <property type="evidence" value="ECO:0007669"/>
    <property type="project" value="UniProtKB-UniRule"/>
</dbReference>
<dbReference type="CDD" id="cd23945">
    <property type="entry name" value="PAPS_reductase"/>
    <property type="match status" value="1"/>
</dbReference>
<dbReference type="Gene3D" id="3.40.50.620">
    <property type="entry name" value="HUPs"/>
    <property type="match status" value="1"/>
</dbReference>
<dbReference type="HAMAP" id="MF_00063">
    <property type="entry name" value="CysH"/>
    <property type="match status" value="1"/>
</dbReference>
<dbReference type="InterPro" id="IPR004511">
    <property type="entry name" value="PAPS/APS_Rdtase"/>
</dbReference>
<dbReference type="InterPro" id="IPR002500">
    <property type="entry name" value="PAPS_reduct_dom"/>
</dbReference>
<dbReference type="InterPro" id="IPR011800">
    <property type="entry name" value="PAPS_reductase_CysH"/>
</dbReference>
<dbReference type="InterPro" id="IPR014729">
    <property type="entry name" value="Rossmann-like_a/b/a_fold"/>
</dbReference>
<dbReference type="NCBIfam" id="TIGR00434">
    <property type="entry name" value="cysH"/>
    <property type="match status" value="1"/>
</dbReference>
<dbReference type="NCBIfam" id="TIGR02057">
    <property type="entry name" value="PAPS_reductase"/>
    <property type="match status" value="1"/>
</dbReference>
<dbReference type="NCBIfam" id="NF002537">
    <property type="entry name" value="PRK02090.1"/>
    <property type="match status" value="1"/>
</dbReference>
<dbReference type="PANTHER" id="PTHR46509">
    <property type="entry name" value="PHOSPHOADENOSINE PHOSPHOSULFATE REDUCTASE"/>
    <property type="match status" value="1"/>
</dbReference>
<dbReference type="PANTHER" id="PTHR46509:SF1">
    <property type="entry name" value="PHOSPHOADENOSINE PHOSPHOSULFATE REDUCTASE"/>
    <property type="match status" value="1"/>
</dbReference>
<dbReference type="Pfam" id="PF01507">
    <property type="entry name" value="PAPS_reduct"/>
    <property type="match status" value="1"/>
</dbReference>
<dbReference type="PIRSF" id="PIRSF000857">
    <property type="entry name" value="PAPS_reductase"/>
    <property type="match status" value="1"/>
</dbReference>
<dbReference type="SUPFAM" id="SSF52402">
    <property type="entry name" value="Adenine nucleotide alpha hydrolases-like"/>
    <property type="match status" value="1"/>
</dbReference>